<comment type="function">
    <text evidence="1">One of the essential components for the initiation of protein synthesis. Stabilizes the binding of IF-2 and IF-3 on the 30S subunit to which N-formylmethionyl-tRNA(fMet) subsequently binds. Helps modulate mRNA selection, yielding the 30S pre-initiation complex (PIC). Upon addition of the 50S ribosomal subunit IF-1, IF-2 and IF-3 are released leaving the mature 70S translation initiation complex.</text>
</comment>
<comment type="subunit">
    <text evidence="1">Component of the 30S ribosomal translation pre-initiation complex which assembles on the 30S ribosome in the order IF-2 and IF-3, IF-1 and N-formylmethionyl-tRNA(fMet); mRNA recruitment can occur at any time during PIC assembly.</text>
</comment>
<comment type="subcellular location">
    <subcellularLocation>
        <location evidence="1">Cytoplasm</location>
    </subcellularLocation>
</comment>
<comment type="similarity">
    <text evidence="1">Belongs to the IF-1 family.</text>
</comment>
<feature type="chain" id="PRO_0000338944" description="Translation initiation factor IF-1">
    <location>
        <begin position="1"/>
        <end position="86"/>
    </location>
</feature>
<feature type="domain" description="S1-like" evidence="1">
    <location>
        <begin position="1"/>
        <end position="72"/>
    </location>
</feature>
<name>IF1_PSELT</name>
<keyword id="KW-0963">Cytoplasm</keyword>
<keyword id="KW-0396">Initiation factor</keyword>
<keyword id="KW-0648">Protein biosynthesis</keyword>
<keyword id="KW-1185">Reference proteome</keyword>
<keyword id="KW-0694">RNA-binding</keyword>
<keyword id="KW-0699">rRNA-binding</keyword>
<reference key="1">
    <citation type="submission" date="2007-08" db="EMBL/GenBank/DDBJ databases">
        <title>Complete sequence of Thermotoga lettingae TMO.</title>
        <authorList>
            <consortium name="US DOE Joint Genome Institute"/>
            <person name="Copeland A."/>
            <person name="Lucas S."/>
            <person name="Lapidus A."/>
            <person name="Barry K."/>
            <person name="Glavina del Rio T."/>
            <person name="Dalin E."/>
            <person name="Tice H."/>
            <person name="Pitluck S."/>
            <person name="Foster B."/>
            <person name="Bruce D."/>
            <person name="Schmutz J."/>
            <person name="Larimer F."/>
            <person name="Land M."/>
            <person name="Hauser L."/>
            <person name="Kyrpides N."/>
            <person name="Mikhailova N."/>
            <person name="Nelson K."/>
            <person name="Gogarten J.P."/>
            <person name="Noll K."/>
            <person name="Richardson P."/>
        </authorList>
    </citation>
    <scope>NUCLEOTIDE SEQUENCE [LARGE SCALE GENOMIC DNA]</scope>
    <source>
        <strain>ATCC BAA-301 / DSM 14385 / NBRC 107922 / TMO</strain>
    </source>
</reference>
<sequence length="86" mass="9851">MPKDDVIKMEGTITEARRNATFLVELDNGHKILAQISGRMRKNFIRLFPGDRVVVELSIYDLTKGRIVYRKKLDRKGSDEGTGERS</sequence>
<evidence type="ECO:0000255" key="1">
    <source>
        <dbReference type="HAMAP-Rule" id="MF_00075"/>
    </source>
</evidence>
<protein>
    <recommendedName>
        <fullName evidence="1">Translation initiation factor IF-1</fullName>
    </recommendedName>
</protein>
<organism>
    <name type="scientific">Pseudothermotoga lettingae (strain ATCC BAA-301 / DSM 14385 / NBRC 107922 / TMO)</name>
    <name type="common">Thermotoga lettingae</name>
    <dbReference type="NCBI Taxonomy" id="416591"/>
    <lineage>
        <taxon>Bacteria</taxon>
        <taxon>Thermotogati</taxon>
        <taxon>Thermotogota</taxon>
        <taxon>Thermotogae</taxon>
        <taxon>Thermotogales</taxon>
        <taxon>Thermotogaceae</taxon>
        <taxon>Pseudothermotoga</taxon>
    </lineage>
</organism>
<proteinExistence type="inferred from homology"/>
<gene>
    <name evidence="1" type="primary">infA</name>
    <name type="ordered locus">Tlet_0602</name>
</gene>
<accession>A8F4T4</accession>
<dbReference type="EMBL" id="CP000812">
    <property type="protein sequence ID" value="ABV33168.1"/>
    <property type="molecule type" value="Genomic_DNA"/>
</dbReference>
<dbReference type="RefSeq" id="WP_012002649.1">
    <property type="nucleotide sequence ID" value="NZ_BSDV01000001.1"/>
</dbReference>
<dbReference type="SMR" id="A8F4T4"/>
<dbReference type="STRING" id="416591.Tlet_0602"/>
<dbReference type="KEGG" id="tle:Tlet_0602"/>
<dbReference type="eggNOG" id="COG0361">
    <property type="taxonomic scope" value="Bacteria"/>
</dbReference>
<dbReference type="HOGENOM" id="CLU_151267_1_0_0"/>
<dbReference type="OrthoDB" id="9803250at2"/>
<dbReference type="Proteomes" id="UP000002016">
    <property type="component" value="Chromosome"/>
</dbReference>
<dbReference type="GO" id="GO:0005829">
    <property type="term" value="C:cytosol"/>
    <property type="evidence" value="ECO:0007669"/>
    <property type="project" value="TreeGrafter"/>
</dbReference>
<dbReference type="GO" id="GO:0043022">
    <property type="term" value="F:ribosome binding"/>
    <property type="evidence" value="ECO:0007669"/>
    <property type="project" value="UniProtKB-UniRule"/>
</dbReference>
<dbReference type="GO" id="GO:0019843">
    <property type="term" value="F:rRNA binding"/>
    <property type="evidence" value="ECO:0007669"/>
    <property type="project" value="UniProtKB-UniRule"/>
</dbReference>
<dbReference type="GO" id="GO:0003743">
    <property type="term" value="F:translation initiation factor activity"/>
    <property type="evidence" value="ECO:0007669"/>
    <property type="project" value="UniProtKB-UniRule"/>
</dbReference>
<dbReference type="CDD" id="cd04451">
    <property type="entry name" value="S1_IF1"/>
    <property type="match status" value="1"/>
</dbReference>
<dbReference type="FunFam" id="2.40.50.140:FF:000002">
    <property type="entry name" value="Translation initiation factor IF-1"/>
    <property type="match status" value="1"/>
</dbReference>
<dbReference type="Gene3D" id="2.40.50.140">
    <property type="entry name" value="Nucleic acid-binding proteins"/>
    <property type="match status" value="1"/>
</dbReference>
<dbReference type="HAMAP" id="MF_00075">
    <property type="entry name" value="IF_1"/>
    <property type="match status" value="1"/>
</dbReference>
<dbReference type="InterPro" id="IPR012340">
    <property type="entry name" value="NA-bd_OB-fold"/>
</dbReference>
<dbReference type="InterPro" id="IPR006196">
    <property type="entry name" value="RNA-binding_domain_S1_IF1"/>
</dbReference>
<dbReference type="InterPro" id="IPR004368">
    <property type="entry name" value="TIF_IF1"/>
</dbReference>
<dbReference type="NCBIfam" id="TIGR00008">
    <property type="entry name" value="infA"/>
    <property type="match status" value="1"/>
</dbReference>
<dbReference type="PANTHER" id="PTHR33370">
    <property type="entry name" value="TRANSLATION INITIATION FACTOR IF-1, CHLOROPLASTIC"/>
    <property type="match status" value="1"/>
</dbReference>
<dbReference type="PANTHER" id="PTHR33370:SF1">
    <property type="entry name" value="TRANSLATION INITIATION FACTOR IF-1, CHLOROPLASTIC"/>
    <property type="match status" value="1"/>
</dbReference>
<dbReference type="Pfam" id="PF01176">
    <property type="entry name" value="eIF-1a"/>
    <property type="match status" value="1"/>
</dbReference>
<dbReference type="SUPFAM" id="SSF50249">
    <property type="entry name" value="Nucleic acid-binding proteins"/>
    <property type="match status" value="1"/>
</dbReference>
<dbReference type="PROSITE" id="PS50832">
    <property type="entry name" value="S1_IF1_TYPE"/>
    <property type="match status" value="1"/>
</dbReference>